<dbReference type="EC" id="6.1.1.14" evidence="1"/>
<dbReference type="EMBL" id="AM946015">
    <property type="protein sequence ID" value="CAR43108.1"/>
    <property type="molecule type" value="Genomic_DNA"/>
</dbReference>
<dbReference type="RefSeq" id="WP_015911755.1">
    <property type="nucleotide sequence ID" value="NC_012004.1"/>
</dbReference>
<dbReference type="SMR" id="B9DV93"/>
<dbReference type="STRING" id="218495.SUB1436"/>
<dbReference type="KEGG" id="sub:SUB1436"/>
<dbReference type="eggNOG" id="COG0752">
    <property type="taxonomic scope" value="Bacteria"/>
</dbReference>
<dbReference type="HOGENOM" id="CLU_057066_1_0_9"/>
<dbReference type="OrthoDB" id="9802183at2"/>
<dbReference type="Proteomes" id="UP000000449">
    <property type="component" value="Chromosome"/>
</dbReference>
<dbReference type="GO" id="GO:0005829">
    <property type="term" value="C:cytosol"/>
    <property type="evidence" value="ECO:0007669"/>
    <property type="project" value="TreeGrafter"/>
</dbReference>
<dbReference type="GO" id="GO:0005524">
    <property type="term" value="F:ATP binding"/>
    <property type="evidence" value="ECO:0007669"/>
    <property type="project" value="UniProtKB-UniRule"/>
</dbReference>
<dbReference type="GO" id="GO:0140096">
    <property type="term" value="F:catalytic activity, acting on a protein"/>
    <property type="evidence" value="ECO:0007669"/>
    <property type="project" value="UniProtKB-ARBA"/>
</dbReference>
<dbReference type="GO" id="GO:0004820">
    <property type="term" value="F:glycine-tRNA ligase activity"/>
    <property type="evidence" value="ECO:0007669"/>
    <property type="project" value="UniProtKB-UniRule"/>
</dbReference>
<dbReference type="GO" id="GO:0016740">
    <property type="term" value="F:transferase activity"/>
    <property type="evidence" value="ECO:0007669"/>
    <property type="project" value="UniProtKB-ARBA"/>
</dbReference>
<dbReference type="GO" id="GO:0006426">
    <property type="term" value="P:glycyl-tRNA aminoacylation"/>
    <property type="evidence" value="ECO:0007669"/>
    <property type="project" value="UniProtKB-UniRule"/>
</dbReference>
<dbReference type="CDD" id="cd00733">
    <property type="entry name" value="GlyRS_alpha_core"/>
    <property type="match status" value="1"/>
</dbReference>
<dbReference type="FunFam" id="3.30.930.10:FF:000006">
    <property type="entry name" value="Glycine--tRNA ligase alpha subunit"/>
    <property type="match status" value="1"/>
</dbReference>
<dbReference type="Gene3D" id="3.30.930.10">
    <property type="entry name" value="Bira Bifunctional Protein, Domain 2"/>
    <property type="match status" value="1"/>
</dbReference>
<dbReference type="Gene3D" id="1.20.58.180">
    <property type="entry name" value="Class II aaRS and biotin synthetases, domain 2"/>
    <property type="match status" value="1"/>
</dbReference>
<dbReference type="HAMAP" id="MF_00254">
    <property type="entry name" value="Gly_tRNA_synth_alpha"/>
    <property type="match status" value="1"/>
</dbReference>
<dbReference type="InterPro" id="IPR045864">
    <property type="entry name" value="aa-tRNA-synth_II/BPL/LPL"/>
</dbReference>
<dbReference type="InterPro" id="IPR006194">
    <property type="entry name" value="Gly-tRNA-synth_heterodimer"/>
</dbReference>
<dbReference type="InterPro" id="IPR002310">
    <property type="entry name" value="Gly-tRNA_ligase_asu"/>
</dbReference>
<dbReference type="NCBIfam" id="TIGR00388">
    <property type="entry name" value="glyQ"/>
    <property type="match status" value="1"/>
</dbReference>
<dbReference type="NCBIfam" id="NF006827">
    <property type="entry name" value="PRK09348.1"/>
    <property type="match status" value="1"/>
</dbReference>
<dbReference type="PANTHER" id="PTHR30075:SF2">
    <property type="entry name" value="GLYCINE--TRNA LIGASE, CHLOROPLASTIC_MITOCHONDRIAL 2"/>
    <property type="match status" value="1"/>
</dbReference>
<dbReference type="PANTHER" id="PTHR30075">
    <property type="entry name" value="GLYCYL-TRNA SYNTHETASE"/>
    <property type="match status" value="1"/>
</dbReference>
<dbReference type="Pfam" id="PF02091">
    <property type="entry name" value="tRNA-synt_2e"/>
    <property type="match status" value="1"/>
</dbReference>
<dbReference type="PRINTS" id="PR01044">
    <property type="entry name" value="TRNASYNTHGA"/>
</dbReference>
<dbReference type="SUPFAM" id="SSF55681">
    <property type="entry name" value="Class II aaRS and biotin synthetases"/>
    <property type="match status" value="1"/>
</dbReference>
<dbReference type="PROSITE" id="PS50861">
    <property type="entry name" value="AA_TRNA_LIGASE_II_GLYAB"/>
    <property type="match status" value="1"/>
</dbReference>
<gene>
    <name evidence="1" type="primary">glyQ</name>
    <name type="ordered locus">SUB1436</name>
</gene>
<feature type="chain" id="PRO_1000125559" description="Glycine--tRNA ligase alpha subunit">
    <location>
        <begin position="1"/>
        <end position="305"/>
    </location>
</feature>
<reference key="1">
    <citation type="journal article" date="2009" name="BMC Genomics">
        <title>Evidence for niche adaptation in the genome of the bovine pathogen Streptococcus uberis.</title>
        <authorList>
            <person name="Ward P.N."/>
            <person name="Holden M.T.G."/>
            <person name="Leigh J.A."/>
            <person name="Lennard N."/>
            <person name="Bignell A."/>
            <person name="Barron A."/>
            <person name="Clark L."/>
            <person name="Quail M.A."/>
            <person name="Woodward J."/>
            <person name="Barrell B.G."/>
            <person name="Egan S.A."/>
            <person name="Field T.R."/>
            <person name="Maskell D."/>
            <person name="Kehoe M."/>
            <person name="Dowson C.G."/>
            <person name="Chanter N."/>
            <person name="Whatmore A.M."/>
            <person name="Bentley S.D."/>
            <person name="Parkhill J."/>
        </authorList>
    </citation>
    <scope>NUCLEOTIDE SEQUENCE [LARGE SCALE GENOMIC DNA]</scope>
    <source>
        <strain>ATCC BAA-854 / 0140J</strain>
    </source>
</reference>
<accession>B9DV93</accession>
<sequence>MSKKLTFQEIILTLQQFWNDKGCMLMQAYDNEKGAGTMSPYTFLRAIGPEPWNAAYVEPSRRPADGRYGENPNRLYQHHQFQVVMKPSPSNIQELYLESLEKLGINPLEHDIRFVEDNWENPSTGSAGLGWEVWLDGMEITQFTYFQQVGGLATQPVTSEVTYGLERLASYIQEVDSVYDIEWSPGVKYGEIFLQPEYEHSKYSFEISDQVMLLENFEKFEKEASRALEEGLVHPAYDYVLKCSHTFNLLDARGAVSVTERAGYIARIRNLARLVAKTFVAERRKLGYPLLDEATRVELLKEETE</sequence>
<organism>
    <name type="scientific">Streptococcus uberis (strain ATCC BAA-854 / 0140J)</name>
    <dbReference type="NCBI Taxonomy" id="218495"/>
    <lineage>
        <taxon>Bacteria</taxon>
        <taxon>Bacillati</taxon>
        <taxon>Bacillota</taxon>
        <taxon>Bacilli</taxon>
        <taxon>Lactobacillales</taxon>
        <taxon>Streptococcaceae</taxon>
        <taxon>Streptococcus</taxon>
    </lineage>
</organism>
<comment type="catalytic activity">
    <reaction evidence="1">
        <text>tRNA(Gly) + glycine + ATP = glycyl-tRNA(Gly) + AMP + diphosphate</text>
        <dbReference type="Rhea" id="RHEA:16013"/>
        <dbReference type="Rhea" id="RHEA-COMP:9664"/>
        <dbReference type="Rhea" id="RHEA-COMP:9683"/>
        <dbReference type="ChEBI" id="CHEBI:30616"/>
        <dbReference type="ChEBI" id="CHEBI:33019"/>
        <dbReference type="ChEBI" id="CHEBI:57305"/>
        <dbReference type="ChEBI" id="CHEBI:78442"/>
        <dbReference type="ChEBI" id="CHEBI:78522"/>
        <dbReference type="ChEBI" id="CHEBI:456215"/>
        <dbReference type="EC" id="6.1.1.14"/>
    </reaction>
</comment>
<comment type="subunit">
    <text evidence="1">Tetramer of two alpha and two beta subunits.</text>
</comment>
<comment type="subcellular location">
    <subcellularLocation>
        <location evidence="1">Cytoplasm</location>
    </subcellularLocation>
</comment>
<comment type="similarity">
    <text evidence="1">Belongs to the class-II aminoacyl-tRNA synthetase family.</text>
</comment>
<evidence type="ECO:0000255" key="1">
    <source>
        <dbReference type="HAMAP-Rule" id="MF_00254"/>
    </source>
</evidence>
<name>SYGA_STRU0</name>
<proteinExistence type="inferred from homology"/>
<keyword id="KW-0030">Aminoacyl-tRNA synthetase</keyword>
<keyword id="KW-0067">ATP-binding</keyword>
<keyword id="KW-0963">Cytoplasm</keyword>
<keyword id="KW-0436">Ligase</keyword>
<keyword id="KW-0547">Nucleotide-binding</keyword>
<keyword id="KW-0648">Protein biosynthesis</keyword>
<keyword id="KW-1185">Reference proteome</keyword>
<protein>
    <recommendedName>
        <fullName evidence="1">Glycine--tRNA ligase alpha subunit</fullName>
        <ecNumber evidence="1">6.1.1.14</ecNumber>
    </recommendedName>
    <alternativeName>
        <fullName evidence="1">Glycyl-tRNA synthetase alpha subunit</fullName>
        <shortName evidence="1">GlyRS</shortName>
    </alternativeName>
</protein>